<evidence type="ECO:0000255" key="1">
    <source>
        <dbReference type="HAMAP-Rule" id="MF_00418"/>
    </source>
</evidence>
<evidence type="ECO:0000305" key="2"/>
<keyword id="KW-0028">Amino-acid biosynthesis</keyword>
<keyword id="KW-0963">Cytoplasm</keyword>
<keyword id="KW-0220">Diaminopimelate biosynthesis</keyword>
<keyword id="KW-0903">Direct protein sequencing</keyword>
<keyword id="KW-0456">Lyase</keyword>
<keyword id="KW-0457">Lysine biosynthesis</keyword>
<keyword id="KW-1185">Reference proteome</keyword>
<keyword id="KW-0704">Schiff base</keyword>
<gene>
    <name evidence="1" type="primary">dapA</name>
    <name type="ordered locus">BSU16770</name>
</gene>
<dbReference type="EC" id="4.3.3.7" evidence="1"/>
<dbReference type="EMBL" id="L08471">
    <property type="protein sequence ID" value="AAA22385.1"/>
    <property type="molecule type" value="Genomic_DNA"/>
</dbReference>
<dbReference type="EMBL" id="AL009126">
    <property type="protein sequence ID" value="CAB13550.1"/>
    <property type="molecule type" value="Genomic_DNA"/>
</dbReference>
<dbReference type="PIR" id="E46665">
    <property type="entry name" value="E46665"/>
</dbReference>
<dbReference type="RefSeq" id="NP_389559.1">
    <property type="nucleotide sequence ID" value="NC_000964.3"/>
</dbReference>
<dbReference type="RefSeq" id="WP_003245816.1">
    <property type="nucleotide sequence ID" value="NZ_OZ025638.1"/>
</dbReference>
<dbReference type="SMR" id="Q04796"/>
<dbReference type="FunCoup" id="Q04796">
    <property type="interactions" value="451"/>
</dbReference>
<dbReference type="STRING" id="224308.BSU16770"/>
<dbReference type="BindingDB" id="Q04796"/>
<dbReference type="ChEMBL" id="CHEMBL5904"/>
<dbReference type="jPOST" id="Q04796"/>
<dbReference type="PaxDb" id="224308-BSU16770"/>
<dbReference type="EnsemblBacteria" id="CAB13550">
    <property type="protein sequence ID" value="CAB13550"/>
    <property type="gene ID" value="BSU_16770"/>
</dbReference>
<dbReference type="GeneID" id="939657"/>
<dbReference type="KEGG" id="bsu:BSU16770"/>
<dbReference type="PATRIC" id="fig|224308.179.peg.1819"/>
<dbReference type="eggNOG" id="COG0329">
    <property type="taxonomic scope" value="Bacteria"/>
</dbReference>
<dbReference type="InParanoid" id="Q04796"/>
<dbReference type="OrthoDB" id="9782828at2"/>
<dbReference type="PhylomeDB" id="Q04796"/>
<dbReference type="BioCyc" id="BSUB:BSU16770-MONOMER"/>
<dbReference type="BioCyc" id="MetaCyc:BSU16770-MONOMER"/>
<dbReference type="UniPathway" id="UPA00034">
    <property type="reaction ID" value="UER00017"/>
</dbReference>
<dbReference type="PRO" id="PR:Q04796"/>
<dbReference type="Proteomes" id="UP000001570">
    <property type="component" value="Chromosome"/>
</dbReference>
<dbReference type="GO" id="GO:0005829">
    <property type="term" value="C:cytosol"/>
    <property type="evidence" value="ECO:0000318"/>
    <property type="project" value="GO_Central"/>
</dbReference>
<dbReference type="GO" id="GO:0008840">
    <property type="term" value="F:4-hydroxy-tetrahydrodipicolinate synthase activity"/>
    <property type="evidence" value="ECO:0000318"/>
    <property type="project" value="GO_Central"/>
</dbReference>
<dbReference type="GO" id="GO:0019877">
    <property type="term" value="P:diaminopimelate biosynthetic process"/>
    <property type="evidence" value="ECO:0007669"/>
    <property type="project" value="UniProtKB-UniRule"/>
</dbReference>
<dbReference type="GO" id="GO:0009089">
    <property type="term" value="P:lysine biosynthetic process via diaminopimelate"/>
    <property type="evidence" value="ECO:0007669"/>
    <property type="project" value="UniProtKB-UniRule"/>
</dbReference>
<dbReference type="CDD" id="cd00950">
    <property type="entry name" value="DHDPS"/>
    <property type="match status" value="1"/>
</dbReference>
<dbReference type="Gene3D" id="3.20.20.70">
    <property type="entry name" value="Aldolase class I"/>
    <property type="match status" value="1"/>
</dbReference>
<dbReference type="HAMAP" id="MF_00418">
    <property type="entry name" value="DapA"/>
    <property type="match status" value="1"/>
</dbReference>
<dbReference type="InterPro" id="IPR013785">
    <property type="entry name" value="Aldolase_TIM"/>
</dbReference>
<dbReference type="InterPro" id="IPR005263">
    <property type="entry name" value="DapA"/>
</dbReference>
<dbReference type="InterPro" id="IPR002220">
    <property type="entry name" value="DapA-like"/>
</dbReference>
<dbReference type="InterPro" id="IPR020625">
    <property type="entry name" value="Schiff_base-form_aldolases_AS"/>
</dbReference>
<dbReference type="InterPro" id="IPR020624">
    <property type="entry name" value="Schiff_base-form_aldolases_CS"/>
</dbReference>
<dbReference type="NCBIfam" id="TIGR00674">
    <property type="entry name" value="dapA"/>
    <property type="match status" value="1"/>
</dbReference>
<dbReference type="PANTHER" id="PTHR12128:SF66">
    <property type="entry name" value="4-HYDROXY-2-OXOGLUTARATE ALDOLASE, MITOCHONDRIAL"/>
    <property type="match status" value="1"/>
</dbReference>
<dbReference type="PANTHER" id="PTHR12128">
    <property type="entry name" value="DIHYDRODIPICOLINATE SYNTHASE"/>
    <property type="match status" value="1"/>
</dbReference>
<dbReference type="Pfam" id="PF00701">
    <property type="entry name" value="DHDPS"/>
    <property type="match status" value="1"/>
</dbReference>
<dbReference type="PIRSF" id="PIRSF001365">
    <property type="entry name" value="DHDPS"/>
    <property type="match status" value="1"/>
</dbReference>
<dbReference type="PRINTS" id="PR00146">
    <property type="entry name" value="DHPICSNTHASE"/>
</dbReference>
<dbReference type="SMART" id="SM01130">
    <property type="entry name" value="DHDPS"/>
    <property type="match status" value="1"/>
</dbReference>
<dbReference type="SUPFAM" id="SSF51569">
    <property type="entry name" value="Aldolase"/>
    <property type="match status" value="1"/>
</dbReference>
<dbReference type="PROSITE" id="PS00665">
    <property type="entry name" value="DHDPS_1"/>
    <property type="match status" value="1"/>
</dbReference>
<dbReference type="PROSITE" id="PS00666">
    <property type="entry name" value="DHDPS_2"/>
    <property type="match status" value="1"/>
</dbReference>
<sequence length="290" mass="31042">MNFGNVSTAMITPFDNKGNVDFQKLSTLIDYLLKNGTDSLVVAGTTGESPTLSTEEKIALFEYTVKEVNGRVPVIAGTGSNNTKDSIKLTKKAEEAGVDAVMLVTPYYNKPSQEGMYQHFKAIAAETSLPVMLYNVPGRTVASLAPETTIRLAADIPNVVAIKEASGDLEAITKIIAETPEDFYVYSGDDALTLPILSVGGRGVVSVASHIAGTDMQQMIKNYTNGQTANAALIHQKLLPIMKELFKAPNPAPVKTALQLRGLDVGSVRLPLVPLTEDERLSLSSTISEL</sequence>
<accession>Q04796</accession>
<organism>
    <name type="scientific">Bacillus subtilis (strain 168)</name>
    <dbReference type="NCBI Taxonomy" id="224308"/>
    <lineage>
        <taxon>Bacteria</taxon>
        <taxon>Bacillati</taxon>
        <taxon>Bacillota</taxon>
        <taxon>Bacilli</taxon>
        <taxon>Bacillales</taxon>
        <taxon>Bacillaceae</taxon>
        <taxon>Bacillus</taxon>
    </lineage>
</organism>
<feature type="chain" id="PRO_0000103084" description="4-hydroxy-tetrahydrodipicolinate synthase">
    <location>
        <begin position="1"/>
        <end position="290"/>
    </location>
</feature>
<feature type="active site" description="Proton donor/acceptor" evidence="1">
    <location>
        <position position="134"/>
    </location>
</feature>
<feature type="active site" description="Schiff-base intermediate with substrate" evidence="1">
    <location>
        <position position="163"/>
    </location>
</feature>
<feature type="binding site" evidence="1">
    <location>
        <position position="46"/>
    </location>
    <ligand>
        <name>pyruvate</name>
        <dbReference type="ChEBI" id="CHEBI:15361"/>
    </ligand>
</feature>
<feature type="binding site" evidence="1">
    <location>
        <position position="205"/>
    </location>
    <ligand>
        <name>pyruvate</name>
        <dbReference type="ChEBI" id="CHEBI:15361"/>
    </ligand>
</feature>
<feature type="site" description="Part of a proton relay during catalysis" evidence="1">
    <location>
        <position position="45"/>
    </location>
</feature>
<feature type="site" description="Part of a proton relay during catalysis" evidence="1">
    <location>
        <position position="108"/>
    </location>
</feature>
<comment type="function">
    <text evidence="1">Catalyzes the condensation of (S)-aspartate-beta-semialdehyde [(S)-ASA] and pyruvate to 4-hydroxy-tetrahydrodipicolinate (HTPA).</text>
</comment>
<comment type="catalytic activity">
    <reaction evidence="1">
        <text>L-aspartate 4-semialdehyde + pyruvate = (2S,4S)-4-hydroxy-2,3,4,5-tetrahydrodipicolinate + H2O + H(+)</text>
        <dbReference type="Rhea" id="RHEA:34171"/>
        <dbReference type="ChEBI" id="CHEBI:15361"/>
        <dbReference type="ChEBI" id="CHEBI:15377"/>
        <dbReference type="ChEBI" id="CHEBI:15378"/>
        <dbReference type="ChEBI" id="CHEBI:67139"/>
        <dbReference type="ChEBI" id="CHEBI:537519"/>
        <dbReference type="EC" id="4.3.3.7"/>
    </reaction>
</comment>
<comment type="pathway">
    <text evidence="1">Amino-acid biosynthesis; L-lysine biosynthesis via DAP pathway; (S)-tetrahydrodipicolinate from L-aspartate: step 3/4.</text>
</comment>
<comment type="subunit">
    <text evidence="1">Homotetramer; dimer of dimers.</text>
</comment>
<comment type="subcellular location">
    <subcellularLocation>
        <location evidence="1">Cytoplasm</location>
    </subcellularLocation>
</comment>
<comment type="similarity">
    <text evidence="1">Belongs to the DapA family.</text>
</comment>
<comment type="caution">
    <text evidence="2">Was originally thought to be a dihydrodipicolinate synthase (DHDPS), catalyzing the condensation of (S)-aspartate-beta-semialdehyde [(S)-ASA] and pyruvate to dihydrodipicolinate (DHDP). However, it was shown in E.coli that the product of the enzymatic reaction is not dihydrodipicolinate but in fact (4S)-4-hydroxy-2,3,4,5-tetrahydro-(2S)-dipicolinic acid (HTPA), and that the consecutive dehydration reaction leading to DHDP is not spontaneous but catalyzed by DapB.</text>
</comment>
<name>DAPA_BACSU</name>
<proteinExistence type="evidence at protein level"/>
<reference key="1">
    <citation type="journal article" date="1993" name="J. Biol. Chem.">
        <title>Organization and nucleotide sequence of the Bacillus subtilis diaminopimelate operon, a cluster of genes encoding the first three enzymes of diaminopimelate synthesis and dipicolinate synthase.</title>
        <authorList>
            <person name="Chen N.-Y."/>
            <person name="Jiang S.-Q."/>
            <person name="Klein D.A."/>
            <person name="Paulus H."/>
        </authorList>
    </citation>
    <scope>NUCLEOTIDE SEQUENCE [GENOMIC DNA]</scope>
    <source>
        <strain>168</strain>
    </source>
</reference>
<reference key="2">
    <citation type="journal article" date="1997" name="Nature">
        <title>The complete genome sequence of the Gram-positive bacterium Bacillus subtilis.</title>
        <authorList>
            <person name="Kunst F."/>
            <person name="Ogasawara N."/>
            <person name="Moszer I."/>
            <person name="Albertini A.M."/>
            <person name="Alloni G."/>
            <person name="Azevedo V."/>
            <person name="Bertero M.G."/>
            <person name="Bessieres P."/>
            <person name="Bolotin A."/>
            <person name="Borchert S."/>
            <person name="Borriss R."/>
            <person name="Boursier L."/>
            <person name="Brans A."/>
            <person name="Braun M."/>
            <person name="Brignell S.C."/>
            <person name="Bron S."/>
            <person name="Brouillet S."/>
            <person name="Bruschi C.V."/>
            <person name="Caldwell B."/>
            <person name="Capuano V."/>
            <person name="Carter N.M."/>
            <person name="Choi S.-K."/>
            <person name="Codani J.-J."/>
            <person name="Connerton I.F."/>
            <person name="Cummings N.J."/>
            <person name="Daniel R.A."/>
            <person name="Denizot F."/>
            <person name="Devine K.M."/>
            <person name="Duesterhoeft A."/>
            <person name="Ehrlich S.D."/>
            <person name="Emmerson P.T."/>
            <person name="Entian K.-D."/>
            <person name="Errington J."/>
            <person name="Fabret C."/>
            <person name="Ferrari E."/>
            <person name="Foulger D."/>
            <person name="Fritz C."/>
            <person name="Fujita M."/>
            <person name="Fujita Y."/>
            <person name="Fuma S."/>
            <person name="Galizzi A."/>
            <person name="Galleron N."/>
            <person name="Ghim S.-Y."/>
            <person name="Glaser P."/>
            <person name="Goffeau A."/>
            <person name="Golightly E.J."/>
            <person name="Grandi G."/>
            <person name="Guiseppi G."/>
            <person name="Guy B.J."/>
            <person name="Haga K."/>
            <person name="Haiech J."/>
            <person name="Harwood C.R."/>
            <person name="Henaut A."/>
            <person name="Hilbert H."/>
            <person name="Holsappel S."/>
            <person name="Hosono S."/>
            <person name="Hullo M.-F."/>
            <person name="Itaya M."/>
            <person name="Jones L.-M."/>
            <person name="Joris B."/>
            <person name="Karamata D."/>
            <person name="Kasahara Y."/>
            <person name="Klaerr-Blanchard M."/>
            <person name="Klein C."/>
            <person name="Kobayashi Y."/>
            <person name="Koetter P."/>
            <person name="Koningstein G."/>
            <person name="Krogh S."/>
            <person name="Kumano M."/>
            <person name="Kurita K."/>
            <person name="Lapidus A."/>
            <person name="Lardinois S."/>
            <person name="Lauber J."/>
            <person name="Lazarevic V."/>
            <person name="Lee S.-M."/>
            <person name="Levine A."/>
            <person name="Liu H."/>
            <person name="Masuda S."/>
            <person name="Mauel C."/>
            <person name="Medigue C."/>
            <person name="Medina N."/>
            <person name="Mellado R.P."/>
            <person name="Mizuno M."/>
            <person name="Moestl D."/>
            <person name="Nakai S."/>
            <person name="Noback M."/>
            <person name="Noone D."/>
            <person name="O'Reilly M."/>
            <person name="Ogawa K."/>
            <person name="Ogiwara A."/>
            <person name="Oudega B."/>
            <person name="Park S.-H."/>
            <person name="Parro V."/>
            <person name="Pohl T.M."/>
            <person name="Portetelle D."/>
            <person name="Porwollik S."/>
            <person name="Prescott A.M."/>
            <person name="Presecan E."/>
            <person name="Pujic P."/>
            <person name="Purnelle B."/>
            <person name="Rapoport G."/>
            <person name="Rey M."/>
            <person name="Reynolds S."/>
            <person name="Rieger M."/>
            <person name="Rivolta C."/>
            <person name="Rocha E."/>
            <person name="Roche B."/>
            <person name="Rose M."/>
            <person name="Sadaie Y."/>
            <person name="Sato T."/>
            <person name="Scanlan E."/>
            <person name="Schleich S."/>
            <person name="Schroeter R."/>
            <person name="Scoffone F."/>
            <person name="Sekiguchi J."/>
            <person name="Sekowska A."/>
            <person name="Seror S.J."/>
            <person name="Serror P."/>
            <person name="Shin B.-S."/>
            <person name="Soldo B."/>
            <person name="Sorokin A."/>
            <person name="Tacconi E."/>
            <person name="Takagi T."/>
            <person name="Takahashi H."/>
            <person name="Takemaru K."/>
            <person name="Takeuchi M."/>
            <person name="Tamakoshi A."/>
            <person name="Tanaka T."/>
            <person name="Terpstra P."/>
            <person name="Tognoni A."/>
            <person name="Tosato V."/>
            <person name="Uchiyama S."/>
            <person name="Vandenbol M."/>
            <person name="Vannier F."/>
            <person name="Vassarotti A."/>
            <person name="Viari A."/>
            <person name="Wambutt R."/>
            <person name="Wedler E."/>
            <person name="Wedler H."/>
            <person name="Weitzenegger T."/>
            <person name="Winters P."/>
            <person name="Wipat A."/>
            <person name="Yamamoto H."/>
            <person name="Yamane K."/>
            <person name="Yasumoto K."/>
            <person name="Yata K."/>
            <person name="Yoshida K."/>
            <person name="Yoshikawa H.-F."/>
            <person name="Zumstein E."/>
            <person name="Yoshikawa H."/>
            <person name="Danchin A."/>
        </authorList>
    </citation>
    <scope>NUCLEOTIDE SEQUENCE [LARGE SCALE GENOMIC DNA]</scope>
    <source>
        <strain>168</strain>
    </source>
</reference>
<reference key="3">
    <citation type="journal article" date="1997" name="Electrophoresis">
        <title>First steps from a two-dimensional protein index towards a response-regulation map for Bacillus subtilis.</title>
        <authorList>
            <person name="Antelmann H."/>
            <person name="Bernhardt J."/>
            <person name="Schmid R."/>
            <person name="Mach H."/>
            <person name="Voelker U."/>
            <person name="Hecker M."/>
        </authorList>
    </citation>
    <scope>PROTEIN SEQUENCE OF 1-25</scope>
    <source>
        <strain>168 / IS58</strain>
    </source>
</reference>
<protein>
    <recommendedName>
        <fullName evidence="1">4-hydroxy-tetrahydrodipicolinate synthase</fullName>
        <shortName evidence="1">HTPA synthase</shortName>
        <ecNumber evidence="1">4.3.3.7</ecNumber>
    </recommendedName>
</protein>